<organism>
    <name type="scientific">Parasynechococcus marenigrum (strain WH8102)</name>
    <dbReference type="NCBI Taxonomy" id="84588"/>
    <lineage>
        <taxon>Bacteria</taxon>
        <taxon>Bacillati</taxon>
        <taxon>Cyanobacteriota</taxon>
        <taxon>Cyanophyceae</taxon>
        <taxon>Synechococcales</taxon>
        <taxon>Prochlorococcaceae</taxon>
        <taxon>Parasynechococcus</taxon>
        <taxon>Parasynechococcus marenigrum</taxon>
    </lineage>
</organism>
<dbReference type="EC" id="4.98.1.1" evidence="1"/>
<dbReference type="EMBL" id="BX569693">
    <property type="protein sequence ID" value="CAE08262.1"/>
    <property type="molecule type" value="Genomic_DNA"/>
</dbReference>
<dbReference type="RefSeq" id="WP_011128607.1">
    <property type="nucleotide sequence ID" value="NC_005070.1"/>
</dbReference>
<dbReference type="SMR" id="Q7U5G0"/>
<dbReference type="STRING" id="84588.SYNW1747"/>
<dbReference type="KEGG" id="syw:SYNW1747"/>
<dbReference type="eggNOG" id="COG0276">
    <property type="taxonomic scope" value="Bacteria"/>
</dbReference>
<dbReference type="HOGENOM" id="CLU_018884_4_3_3"/>
<dbReference type="UniPathway" id="UPA00252">
    <property type="reaction ID" value="UER00325"/>
</dbReference>
<dbReference type="Proteomes" id="UP000001422">
    <property type="component" value="Chromosome"/>
</dbReference>
<dbReference type="GO" id="GO:0005737">
    <property type="term" value="C:cytoplasm"/>
    <property type="evidence" value="ECO:0007669"/>
    <property type="project" value="UniProtKB-SubCell"/>
</dbReference>
<dbReference type="GO" id="GO:0004325">
    <property type="term" value="F:ferrochelatase activity"/>
    <property type="evidence" value="ECO:0007669"/>
    <property type="project" value="UniProtKB-UniRule"/>
</dbReference>
<dbReference type="GO" id="GO:0046872">
    <property type="term" value="F:metal ion binding"/>
    <property type="evidence" value="ECO:0007669"/>
    <property type="project" value="UniProtKB-KW"/>
</dbReference>
<dbReference type="GO" id="GO:0006783">
    <property type="term" value="P:heme biosynthetic process"/>
    <property type="evidence" value="ECO:0007669"/>
    <property type="project" value="UniProtKB-UniRule"/>
</dbReference>
<dbReference type="CDD" id="cd00419">
    <property type="entry name" value="Ferrochelatase_C"/>
    <property type="match status" value="1"/>
</dbReference>
<dbReference type="CDD" id="cd03411">
    <property type="entry name" value="Ferrochelatase_N"/>
    <property type="match status" value="1"/>
</dbReference>
<dbReference type="FunFam" id="3.40.50.1400:FF:000006">
    <property type="entry name" value="Ferrochelatase"/>
    <property type="match status" value="1"/>
</dbReference>
<dbReference type="Gene3D" id="3.40.50.1400">
    <property type="match status" value="2"/>
</dbReference>
<dbReference type="HAMAP" id="MF_00323">
    <property type="entry name" value="Ferrochelatase"/>
    <property type="match status" value="1"/>
</dbReference>
<dbReference type="InterPro" id="IPR001015">
    <property type="entry name" value="Ferrochelatase"/>
</dbReference>
<dbReference type="InterPro" id="IPR019772">
    <property type="entry name" value="Ferrochelatase_AS"/>
</dbReference>
<dbReference type="InterPro" id="IPR033644">
    <property type="entry name" value="Ferrochelatase_C"/>
</dbReference>
<dbReference type="InterPro" id="IPR033659">
    <property type="entry name" value="Ferrochelatase_N"/>
</dbReference>
<dbReference type="NCBIfam" id="TIGR00109">
    <property type="entry name" value="hemH"/>
    <property type="match status" value="1"/>
</dbReference>
<dbReference type="PANTHER" id="PTHR11108">
    <property type="entry name" value="FERROCHELATASE"/>
    <property type="match status" value="1"/>
</dbReference>
<dbReference type="PANTHER" id="PTHR11108:SF1">
    <property type="entry name" value="FERROCHELATASE, MITOCHONDRIAL"/>
    <property type="match status" value="1"/>
</dbReference>
<dbReference type="Pfam" id="PF00762">
    <property type="entry name" value="Ferrochelatase"/>
    <property type="match status" value="1"/>
</dbReference>
<dbReference type="SUPFAM" id="SSF53800">
    <property type="entry name" value="Chelatase"/>
    <property type="match status" value="1"/>
</dbReference>
<dbReference type="SUPFAM" id="SSF103511">
    <property type="entry name" value="Chlorophyll a-b binding protein"/>
    <property type="match status" value="1"/>
</dbReference>
<dbReference type="PROSITE" id="PS00534">
    <property type="entry name" value="FERROCHELATASE"/>
    <property type="match status" value="1"/>
</dbReference>
<protein>
    <recommendedName>
        <fullName evidence="1">Ferrochelatase</fullName>
        <ecNumber evidence="1">4.98.1.1</ecNumber>
    </recommendedName>
    <alternativeName>
        <fullName evidence="1">Heme synthase</fullName>
    </alternativeName>
    <alternativeName>
        <fullName evidence="1">Protoheme ferro-lyase</fullName>
    </alternativeName>
</protein>
<feature type="chain" id="PRO_0000175217" description="Ferrochelatase">
    <location>
        <begin position="1"/>
        <end position="391"/>
    </location>
</feature>
<feature type="binding site" evidence="1">
    <location>
        <position position="196"/>
    </location>
    <ligand>
        <name>Fe cation</name>
        <dbReference type="ChEBI" id="CHEBI:24875"/>
    </ligand>
</feature>
<feature type="binding site" evidence="1">
    <location>
        <position position="281"/>
    </location>
    <ligand>
        <name>Fe cation</name>
        <dbReference type="ChEBI" id="CHEBI:24875"/>
    </ligand>
</feature>
<name>HEMH_PARMW</name>
<accession>Q7U5G0</accession>
<sequence length="391" mass="43785">MSRVGVVLLNLGGPERIQDVGPFLYNLFADPEIIRLPSPALQKPLAWLISTLRSGKSQEAYRSIGGGSPLRRITEQQARELQSLLRQRGLDATTYVAMRYWHPFTESAVADMKADGMDEVVVLPLYPHFSISTSGSSFRELQRLRQGDAAFEQLPIRCIRSWFDHPGYIKAMAELIAEEVRNSDDPEKAHVFFSAHGVPKSYVEEAGDPYQQQIEACTDLIMKSLAEHMGHSNPHTLAYQSRVGPVEWLKPYTEEALEQLGEAKTNDLVVVPISFVSEHIETLEEIDIEYRELATEAGVVNFRRVRALDTYPPFIEGLADLVTTSLEGPEVSLDAAAELPTKVKLYPQEKWEWGWNNSSEVWNGRLAMLGFSAFLLELISGHGPLHALGLL</sequence>
<evidence type="ECO:0000255" key="1">
    <source>
        <dbReference type="HAMAP-Rule" id="MF_00323"/>
    </source>
</evidence>
<gene>
    <name evidence="1" type="primary">hemH</name>
    <name type="ordered locus">SYNW1747</name>
</gene>
<proteinExistence type="inferred from homology"/>
<comment type="function">
    <text evidence="1">Catalyzes the ferrous insertion into protoporphyrin IX.</text>
</comment>
<comment type="catalytic activity">
    <reaction evidence="1">
        <text>heme b + 2 H(+) = protoporphyrin IX + Fe(2+)</text>
        <dbReference type="Rhea" id="RHEA:22584"/>
        <dbReference type="ChEBI" id="CHEBI:15378"/>
        <dbReference type="ChEBI" id="CHEBI:29033"/>
        <dbReference type="ChEBI" id="CHEBI:57306"/>
        <dbReference type="ChEBI" id="CHEBI:60344"/>
        <dbReference type="EC" id="4.98.1.1"/>
    </reaction>
</comment>
<comment type="pathway">
    <text evidence="1">Porphyrin-containing compound metabolism; protoheme biosynthesis; protoheme from protoporphyrin-IX: step 1/1.</text>
</comment>
<comment type="subcellular location">
    <subcellularLocation>
        <location evidence="1">Cytoplasm</location>
    </subcellularLocation>
</comment>
<comment type="similarity">
    <text evidence="1">Belongs to the ferrochelatase family.</text>
</comment>
<reference key="1">
    <citation type="journal article" date="2003" name="Nature">
        <title>The genome of a motile marine Synechococcus.</title>
        <authorList>
            <person name="Palenik B."/>
            <person name="Brahamsha B."/>
            <person name="Larimer F.W."/>
            <person name="Land M.L."/>
            <person name="Hauser L."/>
            <person name="Chain P."/>
            <person name="Lamerdin J.E."/>
            <person name="Regala W."/>
            <person name="Allen E.E."/>
            <person name="McCarren J."/>
            <person name="Paulsen I.T."/>
            <person name="Dufresne A."/>
            <person name="Partensky F."/>
            <person name="Webb E.A."/>
            <person name="Waterbury J."/>
        </authorList>
    </citation>
    <scope>NUCLEOTIDE SEQUENCE [LARGE SCALE GENOMIC DNA]</scope>
    <source>
        <strain>WH8102</strain>
    </source>
</reference>
<keyword id="KW-0963">Cytoplasm</keyword>
<keyword id="KW-0350">Heme biosynthesis</keyword>
<keyword id="KW-0408">Iron</keyword>
<keyword id="KW-0456">Lyase</keyword>
<keyword id="KW-0479">Metal-binding</keyword>
<keyword id="KW-0627">Porphyrin biosynthesis</keyword>